<sequence length="380" mass="43050">MASLAAANAEFGFDLFREMDSSQGNGNVFFSSLSIFTALTLIRLGARGDCARQIDKALHFNIPSRQGNSSNNQPGLQYQLKRVLADINSSHKDYELSIATGVFAEKVYDFHKNYIECAENLYNAKVERVDFTNDVQDTRFKINKWIENETHGKIKKVLGDSSLSSSAVMVLVNAVYFKGKWKSAFTKTDTLSCRFRSPTCPGKVVNMMHQERRFNLSTIQQPPMQVLELQYHGGISMYIMLPEDGLCEIESKLSFQNLMDWTNRRKMKSQYVNVFLPQFKIEKNYEMTHHLKSLGLKDIFDESSADLSGIASGGRLYVSKLMHKSFIEVSEEGTEATAATENNIVEKQLPESTVFRADRPFLFVIKKNDIILFTGKVSCP</sequence>
<feature type="chain" id="PRO_0000094109" description="Serpin B7">
    <location>
        <begin position="1"/>
        <end position="380"/>
    </location>
</feature>
<feature type="site" description="Reactive bond" evidence="1">
    <location>
        <begin position="347"/>
        <end position="348"/>
    </location>
</feature>
<feature type="modified residue" description="Phosphoserine" evidence="2">
    <location>
        <position position="217"/>
    </location>
</feature>
<evidence type="ECO:0000250" key="1"/>
<evidence type="ECO:0000250" key="2">
    <source>
        <dbReference type="UniProtKB" id="O75635"/>
    </source>
</evidence>
<evidence type="ECO:0000305" key="3"/>
<reference key="1">
    <citation type="journal article" date="2001" name="Kidney Int.">
        <title>Cloning of rodent megsin revealed its up-regulation in mesangioproliferative nephritis.</title>
        <authorList>
            <person name="Nangaku M."/>
            <person name="Miyata T."/>
            <person name="Suzuki D."/>
            <person name="Umezono T."/>
            <person name="Hashimoto T."/>
            <person name="Wada T."/>
            <person name="Yagi M."/>
            <person name="Nagano N."/>
            <person name="Inagi R."/>
            <person name="Kurokawa K."/>
        </authorList>
    </citation>
    <scope>NUCLEOTIDE SEQUENCE [MRNA]</scope>
</reference>
<reference key="2">
    <citation type="journal article" date="2005" name="Science">
        <title>The transcriptional landscape of the mammalian genome.</title>
        <authorList>
            <person name="Carninci P."/>
            <person name="Kasukawa T."/>
            <person name="Katayama S."/>
            <person name="Gough J."/>
            <person name="Frith M.C."/>
            <person name="Maeda N."/>
            <person name="Oyama R."/>
            <person name="Ravasi T."/>
            <person name="Lenhard B."/>
            <person name="Wells C."/>
            <person name="Kodzius R."/>
            <person name="Shimokawa K."/>
            <person name="Bajic V.B."/>
            <person name="Brenner S.E."/>
            <person name="Batalov S."/>
            <person name="Forrest A.R."/>
            <person name="Zavolan M."/>
            <person name="Davis M.J."/>
            <person name="Wilming L.G."/>
            <person name="Aidinis V."/>
            <person name="Allen J.E."/>
            <person name="Ambesi-Impiombato A."/>
            <person name="Apweiler R."/>
            <person name="Aturaliya R.N."/>
            <person name="Bailey T.L."/>
            <person name="Bansal M."/>
            <person name="Baxter L."/>
            <person name="Beisel K.W."/>
            <person name="Bersano T."/>
            <person name="Bono H."/>
            <person name="Chalk A.M."/>
            <person name="Chiu K.P."/>
            <person name="Choudhary V."/>
            <person name="Christoffels A."/>
            <person name="Clutterbuck D.R."/>
            <person name="Crowe M.L."/>
            <person name="Dalla E."/>
            <person name="Dalrymple B.P."/>
            <person name="de Bono B."/>
            <person name="Della Gatta G."/>
            <person name="di Bernardo D."/>
            <person name="Down T."/>
            <person name="Engstrom P."/>
            <person name="Fagiolini M."/>
            <person name="Faulkner G."/>
            <person name="Fletcher C.F."/>
            <person name="Fukushima T."/>
            <person name="Furuno M."/>
            <person name="Futaki S."/>
            <person name="Gariboldi M."/>
            <person name="Georgii-Hemming P."/>
            <person name="Gingeras T.R."/>
            <person name="Gojobori T."/>
            <person name="Green R.E."/>
            <person name="Gustincich S."/>
            <person name="Harbers M."/>
            <person name="Hayashi Y."/>
            <person name="Hensch T.K."/>
            <person name="Hirokawa N."/>
            <person name="Hill D."/>
            <person name="Huminiecki L."/>
            <person name="Iacono M."/>
            <person name="Ikeo K."/>
            <person name="Iwama A."/>
            <person name="Ishikawa T."/>
            <person name="Jakt M."/>
            <person name="Kanapin A."/>
            <person name="Katoh M."/>
            <person name="Kawasawa Y."/>
            <person name="Kelso J."/>
            <person name="Kitamura H."/>
            <person name="Kitano H."/>
            <person name="Kollias G."/>
            <person name="Krishnan S.P."/>
            <person name="Kruger A."/>
            <person name="Kummerfeld S.K."/>
            <person name="Kurochkin I.V."/>
            <person name="Lareau L.F."/>
            <person name="Lazarevic D."/>
            <person name="Lipovich L."/>
            <person name="Liu J."/>
            <person name="Liuni S."/>
            <person name="McWilliam S."/>
            <person name="Madan Babu M."/>
            <person name="Madera M."/>
            <person name="Marchionni L."/>
            <person name="Matsuda H."/>
            <person name="Matsuzawa S."/>
            <person name="Miki H."/>
            <person name="Mignone F."/>
            <person name="Miyake S."/>
            <person name="Morris K."/>
            <person name="Mottagui-Tabar S."/>
            <person name="Mulder N."/>
            <person name="Nakano N."/>
            <person name="Nakauchi H."/>
            <person name="Ng P."/>
            <person name="Nilsson R."/>
            <person name="Nishiguchi S."/>
            <person name="Nishikawa S."/>
            <person name="Nori F."/>
            <person name="Ohara O."/>
            <person name="Okazaki Y."/>
            <person name="Orlando V."/>
            <person name="Pang K.C."/>
            <person name="Pavan W.J."/>
            <person name="Pavesi G."/>
            <person name="Pesole G."/>
            <person name="Petrovsky N."/>
            <person name="Piazza S."/>
            <person name="Reed J."/>
            <person name="Reid J.F."/>
            <person name="Ring B.Z."/>
            <person name="Ringwald M."/>
            <person name="Rost B."/>
            <person name="Ruan Y."/>
            <person name="Salzberg S.L."/>
            <person name="Sandelin A."/>
            <person name="Schneider C."/>
            <person name="Schoenbach C."/>
            <person name="Sekiguchi K."/>
            <person name="Semple C.A."/>
            <person name="Seno S."/>
            <person name="Sessa L."/>
            <person name="Sheng Y."/>
            <person name="Shibata Y."/>
            <person name="Shimada H."/>
            <person name="Shimada K."/>
            <person name="Silva D."/>
            <person name="Sinclair B."/>
            <person name="Sperling S."/>
            <person name="Stupka E."/>
            <person name="Sugiura K."/>
            <person name="Sultana R."/>
            <person name="Takenaka Y."/>
            <person name="Taki K."/>
            <person name="Tammoja K."/>
            <person name="Tan S.L."/>
            <person name="Tang S."/>
            <person name="Taylor M.S."/>
            <person name="Tegner J."/>
            <person name="Teichmann S.A."/>
            <person name="Ueda H.R."/>
            <person name="van Nimwegen E."/>
            <person name="Verardo R."/>
            <person name="Wei C.L."/>
            <person name="Yagi K."/>
            <person name="Yamanishi H."/>
            <person name="Zabarovsky E."/>
            <person name="Zhu S."/>
            <person name="Zimmer A."/>
            <person name="Hide W."/>
            <person name="Bult C."/>
            <person name="Grimmond S.M."/>
            <person name="Teasdale R.D."/>
            <person name="Liu E.T."/>
            <person name="Brusic V."/>
            <person name="Quackenbush J."/>
            <person name="Wahlestedt C."/>
            <person name="Mattick J.S."/>
            <person name="Hume D.A."/>
            <person name="Kai C."/>
            <person name="Sasaki D."/>
            <person name="Tomaru Y."/>
            <person name="Fukuda S."/>
            <person name="Kanamori-Katayama M."/>
            <person name="Suzuki M."/>
            <person name="Aoki J."/>
            <person name="Arakawa T."/>
            <person name="Iida J."/>
            <person name="Imamura K."/>
            <person name="Itoh M."/>
            <person name="Kato T."/>
            <person name="Kawaji H."/>
            <person name="Kawagashira N."/>
            <person name="Kawashima T."/>
            <person name="Kojima M."/>
            <person name="Kondo S."/>
            <person name="Konno H."/>
            <person name="Nakano K."/>
            <person name="Ninomiya N."/>
            <person name="Nishio T."/>
            <person name="Okada M."/>
            <person name="Plessy C."/>
            <person name="Shibata K."/>
            <person name="Shiraki T."/>
            <person name="Suzuki S."/>
            <person name="Tagami M."/>
            <person name="Waki K."/>
            <person name="Watahiki A."/>
            <person name="Okamura-Oho Y."/>
            <person name="Suzuki H."/>
            <person name="Kawai J."/>
            <person name="Hayashizaki Y."/>
        </authorList>
    </citation>
    <scope>NUCLEOTIDE SEQUENCE [LARGE SCALE MRNA]</scope>
    <source>
        <strain>C57BL/6J</strain>
        <tissue>Skin</tissue>
    </source>
</reference>
<organism>
    <name type="scientific">Mus musculus</name>
    <name type="common">Mouse</name>
    <dbReference type="NCBI Taxonomy" id="10090"/>
    <lineage>
        <taxon>Eukaryota</taxon>
        <taxon>Metazoa</taxon>
        <taxon>Chordata</taxon>
        <taxon>Craniata</taxon>
        <taxon>Vertebrata</taxon>
        <taxon>Euteleostomi</taxon>
        <taxon>Mammalia</taxon>
        <taxon>Eutheria</taxon>
        <taxon>Euarchontoglires</taxon>
        <taxon>Glires</taxon>
        <taxon>Rodentia</taxon>
        <taxon>Myomorpha</taxon>
        <taxon>Muroidea</taxon>
        <taxon>Muridae</taxon>
        <taxon>Murinae</taxon>
        <taxon>Mus</taxon>
        <taxon>Mus</taxon>
    </lineage>
</organism>
<accession>Q9D695</accession>
<dbReference type="EMBL" id="AF105328">
    <property type="protein sequence ID" value="AAL16768.1"/>
    <property type="molecule type" value="mRNA"/>
</dbReference>
<dbReference type="EMBL" id="AK014524">
    <property type="protein sequence ID" value="BAB29410.1"/>
    <property type="molecule type" value="mRNA"/>
</dbReference>
<dbReference type="CCDS" id="CCDS35686.1"/>
<dbReference type="RefSeq" id="NP_081824.1">
    <property type="nucleotide sequence ID" value="NM_027548.4"/>
</dbReference>
<dbReference type="SMR" id="Q9D695"/>
<dbReference type="BioGRID" id="228047">
    <property type="interactions" value="1"/>
</dbReference>
<dbReference type="FunCoup" id="Q9D695">
    <property type="interactions" value="324"/>
</dbReference>
<dbReference type="STRING" id="10090.ENSMUSP00000083896"/>
<dbReference type="MEROPS" id="I04.012"/>
<dbReference type="iPTMnet" id="Q9D695"/>
<dbReference type="PhosphoSitePlus" id="Q9D695"/>
<dbReference type="PaxDb" id="10090-ENSMUSP00000083896"/>
<dbReference type="ProteomicsDB" id="257341"/>
<dbReference type="Antibodypedia" id="10160">
    <property type="antibodies" value="181 antibodies from 26 providers"/>
</dbReference>
<dbReference type="DNASU" id="116872"/>
<dbReference type="Ensembl" id="ENSMUST00000086690.6">
    <property type="protein sequence ID" value="ENSMUSP00000083896.5"/>
    <property type="gene ID" value="ENSMUSG00000067001.12"/>
</dbReference>
<dbReference type="GeneID" id="116872"/>
<dbReference type="KEGG" id="mmu:116872"/>
<dbReference type="UCSC" id="uc007chm.2">
    <property type="organism name" value="mouse"/>
</dbReference>
<dbReference type="AGR" id="MGI:2151053"/>
<dbReference type="CTD" id="8710"/>
<dbReference type="MGI" id="MGI:2151053">
    <property type="gene designation" value="Serpinb7"/>
</dbReference>
<dbReference type="VEuPathDB" id="HostDB:ENSMUSG00000067001"/>
<dbReference type="eggNOG" id="KOG2392">
    <property type="taxonomic scope" value="Eukaryota"/>
</dbReference>
<dbReference type="GeneTree" id="ENSGT00940000161520"/>
<dbReference type="HOGENOM" id="CLU_023330_0_2_1"/>
<dbReference type="InParanoid" id="Q9D695"/>
<dbReference type="OMA" id="LMHQERK"/>
<dbReference type="OrthoDB" id="9518664at2759"/>
<dbReference type="PhylomeDB" id="Q9D695"/>
<dbReference type="TreeFam" id="TF352619"/>
<dbReference type="BioGRID-ORCS" id="116872">
    <property type="hits" value="1 hit in 79 CRISPR screens"/>
</dbReference>
<dbReference type="PRO" id="PR:Q9D695"/>
<dbReference type="Proteomes" id="UP000000589">
    <property type="component" value="Chromosome 1"/>
</dbReference>
<dbReference type="RNAct" id="Q9D695">
    <property type="molecule type" value="protein"/>
</dbReference>
<dbReference type="Bgee" id="ENSMUSG00000067001">
    <property type="expression patterns" value="Expressed in skin of external ear and 25 other cell types or tissues"/>
</dbReference>
<dbReference type="ExpressionAtlas" id="Q9D695">
    <property type="expression patterns" value="baseline and differential"/>
</dbReference>
<dbReference type="GO" id="GO:0005737">
    <property type="term" value="C:cytoplasm"/>
    <property type="evidence" value="ECO:0007669"/>
    <property type="project" value="UniProtKB-SubCell"/>
</dbReference>
<dbReference type="GO" id="GO:0005615">
    <property type="term" value="C:extracellular space"/>
    <property type="evidence" value="ECO:0007669"/>
    <property type="project" value="InterPro"/>
</dbReference>
<dbReference type="GO" id="GO:0004867">
    <property type="term" value="F:serine-type endopeptidase inhibitor activity"/>
    <property type="evidence" value="ECO:0007669"/>
    <property type="project" value="UniProtKB-KW"/>
</dbReference>
<dbReference type="GO" id="GO:0032967">
    <property type="term" value="P:positive regulation of collagen biosynthetic process"/>
    <property type="evidence" value="ECO:0007669"/>
    <property type="project" value="Ensembl"/>
</dbReference>
<dbReference type="GO" id="GO:0072126">
    <property type="term" value="P:positive regulation of glomerular mesangial cell proliferation"/>
    <property type="evidence" value="ECO:0007669"/>
    <property type="project" value="Ensembl"/>
</dbReference>
<dbReference type="GO" id="GO:0090362">
    <property type="term" value="P:positive regulation of platelet-derived growth factor production"/>
    <property type="evidence" value="ECO:0007669"/>
    <property type="project" value="Ensembl"/>
</dbReference>
<dbReference type="GO" id="GO:0032914">
    <property type="term" value="P:positive regulation of transforming growth factor beta1 production"/>
    <property type="evidence" value="ECO:0007669"/>
    <property type="project" value="Ensembl"/>
</dbReference>
<dbReference type="GO" id="GO:0030162">
    <property type="term" value="P:regulation of proteolysis"/>
    <property type="evidence" value="ECO:0000266"/>
    <property type="project" value="MGI"/>
</dbReference>
<dbReference type="CDD" id="cd19566">
    <property type="entry name" value="serpinB7_megsin"/>
    <property type="match status" value="1"/>
</dbReference>
<dbReference type="FunFam" id="2.30.39.10:FF:000001">
    <property type="entry name" value="Serpin family B member 2"/>
    <property type="match status" value="1"/>
</dbReference>
<dbReference type="FunFam" id="3.30.497.10:FF:000015">
    <property type="entry name" value="Serpin family B member 7"/>
    <property type="match status" value="1"/>
</dbReference>
<dbReference type="Gene3D" id="2.30.39.10">
    <property type="entry name" value="Alpha-1-antitrypsin, domain 1"/>
    <property type="match status" value="1"/>
</dbReference>
<dbReference type="Gene3D" id="3.30.497.10">
    <property type="entry name" value="Antithrombin, subunit I, domain 2"/>
    <property type="match status" value="1"/>
</dbReference>
<dbReference type="InterPro" id="IPR023795">
    <property type="entry name" value="Serpin_CS"/>
</dbReference>
<dbReference type="InterPro" id="IPR023796">
    <property type="entry name" value="Serpin_dom"/>
</dbReference>
<dbReference type="InterPro" id="IPR000215">
    <property type="entry name" value="Serpin_fam"/>
</dbReference>
<dbReference type="InterPro" id="IPR036186">
    <property type="entry name" value="Serpin_sf"/>
</dbReference>
<dbReference type="InterPro" id="IPR042178">
    <property type="entry name" value="Serpin_sf_1"/>
</dbReference>
<dbReference type="InterPro" id="IPR042185">
    <property type="entry name" value="Serpin_sf_2"/>
</dbReference>
<dbReference type="PANTHER" id="PTHR11461">
    <property type="entry name" value="SERINE PROTEASE INHIBITOR, SERPIN"/>
    <property type="match status" value="1"/>
</dbReference>
<dbReference type="PANTHER" id="PTHR11461:SF56">
    <property type="entry name" value="SERPIN B7"/>
    <property type="match status" value="1"/>
</dbReference>
<dbReference type="Pfam" id="PF00079">
    <property type="entry name" value="Serpin"/>
    <property type="match status" value="1"/>
</dbReference>
<dbReference type="SMART" id="SM00093">
    <property type="entry name" value="SERPIN"/>
    <property type="match status" value="1"/>
</dbReference>
<dbReference type="SUPFAM" id="SSF56574">
    <property type="entry name" value="Serpins"/>
    <property type="match status" value="1"/>
</dbReference>
<dbReference type="PROSITE" id="PS00284">
    <property type="entry name" value="SERPIN"/>
    <property type="match status" value="1"/>
</dbReference>
<keyword id="KW-0963">Cytoplasm</keyword>
<keyword id="KW-0597">Phosphoprotein</keyword>
<keyword id="KW-0646">Protease inhibitor</keyword>
<keyword id="KW-1185">Reference proteome</keyword>
<keyword id="KW-0722">Serine protease inhibitor</keyword>
<comment type="function">
    <text evidence="1">Might function as an inhibitor of Lys-specific proteases. Might influence the maturation of megakaryocytes via its action as a serpin (By similarity).</text>
</comment>
<comment type="subcellular location">
    <subcellularLocation>
        <location evidence="1">Cytoplasm</location>
    </subcellularLocation>
</comment>
<comment type="similarity">
    <text evidence="3">Belongs to the serpin family. Ov-serpin subfamily.</text>
</comment>
<name>SPB7_MOUSE</name>
<gene>
    <name type="primary">Serpinb7</name>
</gene>
<proteinExistence type="evidence at transcript level"/>
<protein>
    <recommendedName>
        <fullName>Serpin B7</fullName>
    </recommendedName>
    <alternativeName>
        <fullName>Megsin</fullName>
    </alternativeName>
</protein>